<gene>
    <name evidence="1" type="primary">TIF34</name>
    <name type="ORF">PGTG_19816</name>
</gene>
<evidence type="ECO:0000255" key="1">
    <source>
        <dbReference type="HAMAP-Rule" id="MF_03008"/>
    </source>
</evidence>
<evidence type="ECO:0000305" key="2"/>
<feature type="chain" id="PRO_0000419435" description="Eukaryotic translation initiation factor 3 subunit I">
    <location>
        <begin position="1"/>
        <end position="336"/>
    </location>
</feature>
<feature type="repeat" description="WD 1">
    <location>
        <begin position="8"/>
        <end position="49"/>
    </location>
</feature>
<feature type="repeat" description="WD 2">
    <location>
        <begin position="50"/>
        <end position="91"/>
    </location>
</feature>
<feature type="repeat" description="WD 3">
    <location>
        <begin position="93"/>
        <end position="135"/>
    </location>
</feature>
<feature type="repeat" description="WD 4">
    <location>
        <begin position="144"/>
        <end position="183"/>
    </location>
</feature>
<feature type="repeat" description="WD 5">
    <location>
        <begin position="187"/>
        <end position="226"/>
    </location>
</feature>
<feature type="repeat" description="WD 6">
    <location>
        <begin position="285"/>
        <end position="324"/>
    </location>
</feature>
<protein>
    <recommendedName>
        <fullName evidence="1">Eukaryotic translation initiation factor 3 subunit I</fullName>
        <shortName evidence="1">eIF3i</shortName>
    </recommendedName>
    <alternativeName>
        <fullName evidence="1">Eukaryotic translation initiation factor 3 39 kDa subunit homolog</fullName>
        <shortName evidence="1">eIF-3 39 kDa subunit homolog</shortName>
    </alternativeName>
</protein>
<accession>E3LB80</accession>
<dbReference type="EMBL" id="DS178410">
    <property type="protein sequence ID" value="EFP93805.1"/>
    <property type="status" value="ALT_INIT"/>
    <property type="molecule type" value="Genomic_DNA"/>
</dbReference>
<dbReference type="RefSeq" id="XP_003338224.1">
    <property type="nucleotide sequence ID" value="XM_003338176.2"/>
</dbReference>
<dbReference type="SMR" id="E3LB80"/>
<dbReference type="FunCoup" id="E3LB80">
    <property type="interactions" value="539"/>
</dbReference>
<dbReference type="STRING" id="418459.E3LB80"/>
<dbReference type="EnsemblFungi" id="EFP93805">
    <property type="protein sequence ID" value="EFP93805"/>
    <property type="gene ID" value="PGTG_19816"/>
</dbReference>
<dbReference type="GeneID" id="10535259"/>
<dbReference type="KEGG" id="pgr:PGTG_19816"/>
<dbReference type="eggNOG" id="KOG0643">
    <property type="taxonomic scope" value="Eukaryota"/>
</dbReference>
<dbReference type="HOGENOM" id="CLU_043845_0_1_1"/>
<dbReference type="InParanoid" id="E3LB80"/>
<dbReference type="OrthoDB" id="24966at2759"/>
<dbReference type="Proteomes" id="UP000008783">
    <property type="component" value="Unassembled WGS sequence"/>
</dbReference>
<dbReference type="GO" id="GO:0016282">
    <property type="term" value="C:eukaryotic 43S preinitiation complex"/>
    <property type="evidence" value="ECO:0007669"/>
    <property type="project" value="UniProtKB-UniRule"/>
</dbReference>
<dbReference type="GO" id="GO:0033290">
    <property type="term" value="C:eukaryotic 48S preinitiation complex"/>
    <property type="evidence" value="ECO:0007669"/>
    <property type="project" value="UniProtKB-UniRule"/>
</dbReference>
<dbReference type="GO" id="GO:0071540">
    <property type="term" value="C:eukaryotic translation initiation factor 3 complex, eIF3e"/>
    <property type="evidence" value="ECO:0007669"/>
    <property type="project" value="EnsemblFungi"/>
</dbReference>
<dbReference type="GO" id="GO:0071541">
    <property type="term" value="C:eukaryotic translation initiation factor 3 complex, eIF3m"/>
    <property type="evidence" value="ECO:0000318"/>
    <property type="project" value="GO_Central"/>
</dbReference>
<dbReference type="GO" id="GO:0034399">
    <property type="term" value="C:nuclear periphery"/>
    <property type="evidence" value="ECO:0007669"/>
    <property type="project" value="EnsemblFungi"/>
</dbReference>
<dbReference type="GO" id="GO:0003723">
    <property type="term" value="F:RNA binding"/>
    <property type="evidence" value="ECO:0000318"/>
    <property type="project" value="GO_Central"/>
</dbReference>
<dbReference type="GO" id="GO:0003743">
    <property type="term" value="F:translation initiation factor activity"/>
    <property type="evidence" value="ECO:0000318"/>
    <property type="project" value="GO_Central"/>
</dbReference>
<dbReference type="GO" id="GO:0002183">
    <property type="term" value="P:cytoplasmic translational initiation"/>
    <property type="evidence" value="ECO:0000318"/>
    <property type="project" value="GO_Central"/>
</dbReference>
<dbReference type="GO" id="GO:0001732">
    <property type="term" value="P:formation of cytoplasmic translation initiation complex"/>
    <property type="evidence" value="ECO:0007669"/>
    <property type="project" value="UniProtKB-UniRule"/>
</dbReference>
<dbReference type="CDD" id="cd00200">
    <property type="entry name" value="WD40"/>
    <property type="match status" value="1"/>
</dbReference>
<dbReference type="Gene3D" id="2.130.10.10">
    <property type="entry name" value="YVTN repeat-like/Quinoprotein amine dehydrogenase"/>
    <property type="match status" value="1"/>
</dbReference>
<dbReference type="HAMAP" id="MF_03008">
    <property type="entry name" value="eIF3i"/>
    <property type="match status" value="1"/>
</dbReference>
<dbReference type="InterPro" id="IPR027525">
    <property type="entry name" value="eIF3i"/>
</dbReference>
<dbReference type="InterPro" id="IPR015943">
    <property type="entry name" value="WD40/YVTN_repeat-like_dom_sf"/>
</dbReference>
<dbReference type="InterPro" id="IPR019775">
    <property type="entry name" value="WD40_repeat_CS"/>
</dbReference>
<dbReference type="InterPro" id="IPR036322">
    <property type="entry name" value="WD40_repeat_dom_sf"/>
</dbReference>
<dbReference type="InterPro" id="IPR001680">
    <property type="entry name" value="WD40_rpt"/>
</dbReference>
<dbReference type="PANTHER" id="PTHR19877">
    <property type="entry name" value="EUKARYOTIC TRANSLATION INITIATION FACTOR 3 SUBUNIT I"/>
    <property type="match status" value="1"/>
</dbReference>
<dbReference type="PANTHER" id="PTHR19877:SF1">
    <property type="entry name" value="EUKARYOTIC TRANSLATION INITIATION FACTOR 3 SUBUNIT I"/>
    <property type="match status" value="1"/>
</dbReference>
<dbReference type="Pfam" id="PF24805">
    <property type="entry name" value="EIF3I"/>
    <property type="match status" value="1"/>
</dbReference>
<dbReference type="SMART" id="SM00320">
    <property type="entry name" value="WD40"/>
    <property type="match status" value="6"/>
</dbReference>
<dbReference type="SUPFAM" id="SSF50978">
    <property type="entry name" value="WD40 repeat-like"/>
    <property type="match status" value="1"/>
</dbReference>
<dbReference type="PROSITE" id="PS00678">
    <property type="entry name" value="WD_REPEATS_1"/>
    <property type="match status" value="1"/>
</dbReference>
<dbReference type="PROSITE" id="PS50082">
    <property type="entry name" value="WD_REPEATS_2"/>
    <property type="match status" value="4"/>
</dbReference>
<dbReference type="PROSITE" id="PS50294">
    <property type="entry name" value="WD_REPEATS_REGION"/>
    <property type="match status" value="1"/>
</dbReference>
<sequence>MRPILLSGHERSLTQVKYNREGDLLFSCSKDHIINVWFTHNGERLGTYNGHNGTVWSVDVDSKSEFMVSGSADNSMRLWKVSTGECLKAWEFPTAIKRVSWSEDDTKIALVTEQRMGHQGAVRVFEINRDGGPQPDEPLLVFNPIGSKAQVVAFSSLDKHLITGHENGKVALWDVNTGEEVASKEKNHIGLITDLQMSADRTYFVTSSKDKSARLYDSRTLEVIKSYQDPQTPLNSAALIPGKPYLLMGGGQEAMAVTTTSARQGHFEIRMWHVVFEEEVSRIKGGFGPCNSIAVHPEGKGYAIGGEDGYVRLHHFDENTFRAKPYGHETEPKELD</sequence>
<reference key="1">
    <citation type="journal article" date="2011" name="Proc. Natl. Acad. Sci. U.S.A.">
        <title>Obligate biotrophy features unraveled by the genomic analysis of rust fungi.</title>
        <authorList>
            <person name="Duplessis S."/>
            <person name="Cuomo C.A."/>
            <person name="Lin Y.-C."/>
            <person name="Aerts A."/>
            <person name="Tisserant E."/>
            <person name="Veneault-Fourrey C."/>
            <person name="Joly D.L."/>
            <person name="Hacquard S."/>
            <person name="Amselem J."/>
            <person name="Cantarel B.L."/>
            <person name="Chiu R."/>
            <person name="Coutinho P.M."/>
            <person name="Feau N."/>
            <person name="Field M."/>
            <person name="Frey P."/>
            <person name="Gelhaye E."/>
            <person name="Goldberg J."/>
            <person name="Grabherr M.G."/>
            <person name="Kodira C.D."/>
            <person name="Kohler A."/>
            <person name="Kuees U."/>
            <person name="Lindquist E.A."/>
            <person name="Lucas S.M."/>
            <person name="Mago R."/>
            <person name="Mauceli E."/>
            <person name="Morin E."/>
            <person name="Murat C."/>
            <person name="Pangilinan J.L."/>
            <person name="Park R."/>
            <person name="Pearson M."/>
            <person name="Quesneville H."/>
            <person name="Rouhier N."/>
            <person name="Sakthikumar S."/>
            <person name="Salamov A.A."/>
            <person name="Schmutz J."/>
            <person name="Selles B."/>
            <person name="Shapiro H."/>
            <person name="Tanguay P."/>
            <person name="Tuskan G.A."/>
            <person name="Henrissat B."/>
            <person name="Van de Peer Y."/>
            <person name="Rouze P."/>
            <person name="Ellis J.G."/>
            <person name="Dodds P.N."/>
            <person name="Schein J.E."/>
            <person name="Zhong S."/>
            <person name="Hamelin R.C."/>
            <person name="Grigoriev I.V."/>
            <person name="Szabo L.J."/>
            <person name="Martin F."/>
        </authorList>
    </citation>
    <scope>NUCLEOTIDE SEQUENCE [LARGE SCALE GENOMIC DNA]</scope>
    <source>
        <strain>CRL 75-36-700-3 / race SCCL</strain>
    </source>
</reference>
<reference key="2">
    <citation type="journal article" date="2017" name="G3 (Bethesda)">
        <title>Comparative analysis highlights variable genome content of wheat rusts and divergence of the mating loci.</title>
        <authorList>
            <person name="Cuomo C.A."/>
            <person name="Bakkeren G."/>
            <person name="Khalil H.B."/>
            <person name="Panwar V."/>
            <person name="Joly D."/>
            <person name="Linning R."/>
            <person name="Sakthikumar S."/>
            <person name="Song X."/>
            <person name="Adiconis X."/>
            <person name="Fan L."/>
            <person name="Goldberg J.M."/>
            <person name="Levin J.Z."/>
            <person name="Young S."/>
            <person name="Zeng Q."/>
            <person name="Anikster Y."/>
            <person name="Bruce M."/>
            <person name="Wang M."/>
            <person name="Yin C."/>
            <person name="McCallum B."/>
            <person name="Szabo L.J."/>
            <person name="Hulbert S."/>
            <person name="Chen X."/>
            <person name="Fellers J.P."/>
        </authorList>
    </citation>
    <scope>GENOME REANNOTATION</scope>
    <source>
        <strain>CRL 75-36-700-3 / race SCCL</strain>
    </source>
</reference>
<comment type="function">
    <text evidence="1">Component of the eukaryotic translation initiation factor 3 (eIF-3) complex, which is involved in protein synthesis of a specialized repertoire of mRNAs and, together with other initiation factors, stimulates binding of mRNA and methionyl-tRNAi to the 40S ribosome. The eIF-3 complex specifically targets and initiates translation of a subset of mRNAs involved in cell proliferation.</text>
</comment>
<comment type="subunit">
    <text evidence="1">Component of the eukaryotic translation initiation factor 3 (eIF-3) complex.</text>
</comment>
<comment type="subcellular location">
    <subcellularLocation>
        <location evidence="1">Cytoplasm</location>
    </subcellularLocation>
</comment>
<comment type="similarity">
    <text evidence="1">Belongs to the eIF-3 subunit I family.</text>
</comment>
<comment type="sequence caution" evidence="2">
    <conflict type="erroneous initiation">
        <sequence resource="EMBL-CDS" id="EFP93805"/>
    </conflict>
    <text>Extended N-terminus.</text>
</comment>
<proteinExistence type="inferred from homology"/>
<organism>
    <name type="scientific">Puccinia graminis f. sp. tritici (strain CRL 75-36-700-3 / race SCCL)</name>
    <name type="common">Black stem rust fungus</name>
    <dbReference type="NCBI Taxonomy" id="418459"/>
    <lineage>
        <taxon>Eukaryota</taxon>
        <taxon>Fungi</taxon>
        <taxon>Dikarya</taxon>
        <taxon>Basidiomycota</taxon>
        <taxon>Pucciniomycotina</taxon>
        <taxon>Pucciniomycetes</taxon>
        <taxon>Pucciniales</taxon>
        <taxon>Pucciniaceae</taxon>
        <taxon>Puccinia</taxon>
    </lineage>
</organism>
<keyword id="KW-0963">Cytoplasm</keyword>
<keyword id="KW-0396">Initiation factor</keyword>
<keyword id="KW-0648">Protein biosynthesis</keyword>
<keyword id="KW-1185">Reference proteome</keyword>
<keyword id="KW-0677">Repeat</keyword>
<keyword id="KW-0853">WD repeat</keyword>
<name>EIF3I_PUCGT</name>